<organism>
    <name type="scientific">Pseudomonas fluorescens (strain ATCC BAA-477 / NRRL B-23932 / Pf-5)</name>
    <dbReference type="NCBI Taxonomy" id="220664"/>
    <lineage>
        <taxon>Bacteria</taxon>
        <taxon>Pseudomonadati</taxon>
        <taxon>Pseudomonadota</taxon>
        <taxon>Gammaproteobacteria</taxon>
        <taxon>Pseudomonadales</taxon>
        <taxon>Pseudomonadaceae</taxon>
        <taxon>Pseudomonas</taxon>
    </lineage>
</organism>
<keyword id="KW-0414">Isoprene biosynthesis</keyword>
<keyword id="KW-0456">Lyase</keyword>
<keyword id="KW-0479">Metal-binding</keyword>
<sequence length="157" mass="16928">MRIGHGYDVHRFAEGDFITLGGVRIAHHFGLLAHSDGDVLLHALSDALLGAAALGDIGKHFPDTDPQFKGADSRVLLRHVVALIHAKGWKIGNVDNTIVAQAPKMAPHIETMRALIAEDLQVELDQVNVKATTTEKLGFVGREEGIAVHSVALLQRP</sequence>
<name>ISPF_PSEF5</name>
<comment type="function">
    <text evidence="1">Involved in the biosynthesis of isopentenyl diphosphate (IPP) and dimethylallyl diphosphate (DMAPP), two major building blocks of isoprenoid compounds. Catalyzes the conversion of 4-diphosphocytidyl-2-C-methyl-D-erythritol 2-phosphate (CDP-ME2P) to 2-C-methyl-D-erythritol 2,4-cyclodiphosphate (ME-CPP) with a corresponding release of cytidine 5-monophosphate (CMP).</text>
</comment>
<comment type="catalytic activity">
    <reaction evidence="1">
        <text>4-CDP-2-C-methyl-D-erythritol 2-phosphate = 2-C-methyl-D-erythritol 2,4-cyclic diphosphate + CMP</text>
        <dbReference type="Rhea" id="RHEA:23864"/>
        <dbReference type="ChEBI" id="CHEBI:57919"/>
        <dbReference type="ChEBI" id="CHEBI:58483"/>
        <dbReference type="ChEBI" id="CHEBI:60377"/>
        <dbReference type="EC" id="4.6.1.12"/>
    </reaction>
</comment>
<comment type="cofactor">
    <cofactor evidence="1">
        <name>a divalent metal cation</name>
        <dbReference type="ChEBI" id="CHEBI:60240"/>
    </cofactor>
    <text evidence="1">Binds 1 divalent metal cation per subunit.</text>
</comment>
<comment type="pathway">
    <text evidence="1">Isoprenoid biosynthesis; isopentenyl diphosphate biosynthesis via DXP pathway; isopentenyl diphosphate from 1-deoxy-D-xylulose 5-phosphate: step 4/6.</text>
</comment>
<comment type="subunit">
    <text evidence="1">Homotrimer.</text>
</comment>
<comment type="similarity">
    <text evidence="1">Belongs to the IspF family.</text>
</comment>
<reference key="1">
    <citation type="journal article" date="2005" name="Nat. Biotechnol.">
        <title>Complete genome sequence of the plant commensal Pseudomonas fluorescens Pf-5.</title>
        <authorList>
            <person name="Paulsen I.T."/>
            <person name="Press C.M."/>
            <person name="Ravel J."/>
            <person name="Kobayashi D.Y."/>
            <person name="Myers G.S.A."/>
            <person name="Mavrodi D.V."/>
            <person name="DeBoy R.T."/>
            <person name="Seshadri R."/>
            <person name="Ren Q."/>
            <person name="Madupu R."/>
            <person name="Dodson R.J."/>
            <person name="Durkin A.S."/>
            <person name="Brinkac L.M."/>
            <person name="Daugherty S.C."/>
            <person name="Sullivan S.A."/>
            <person name="Rosovitz M.J."/>
            <person name="Gwinn M.L."/>
            <person name="Zhou L."/>
            <person name="Schneider D.J."/>
            <person name="Cartinhour S.W."/>
            <person name="Nelson W.C."/>
            <person name="Weidman J."/>
            <person name="Watkins K."/>
            <person name="Tran K."/>
            <person name="Khouri H."/>
            <person name="Pierson E.A."/>
            <person name="Pierson L.S. III"/>
            <person name="Thomashow L.S."/>
            <person name="Loper J.E."/>
        </authorList>
    </citation>
    <scope>NUCLEOTIDE SEQUENCE [LARGE SCALE GENOMIC DNA]</scope>
    <source>
        <strain>ATCC BAA-477 / NRRL B-23932 / Pf-5</strain>
    </source>
</reference>
<gene>
    <name evidence="1" type="primary">ispF</name>
    <name type="ordered locus">PFL_1202</name>
</gene>
<evidence type="ECO:0000255" key="1">
    <source>
        <dbReference type="HAMAP-Rule" id="MF_00107"/>
    </source>
</evidence>
<dbReference type="EC" id="4.6.1.12" evidence="1"/>
<dbReference type="EMBL" id="CP000076">
    <property type="protein sequence ID" value="AAY90489.1"/>
    <property type="molecule type" value="Genomic_DNA"/>
</dbReference>
<dbReference type="RefSeq" id="WP_011059549.1">
    <property type="nucleotide sequence ID" value="NC_004129.6"/>
</dbReference>
<dbReference type="SMR" id="Q4KHF0"/>
<dbReference type="STRING" id="220664.PFL_1202"/>
<dbReference type="GeneID" id="57474206"/>
<dbReference type="KEGG" id="pfl:PFL_1202"/>
<dbReference type="PATRIC" id="fig|220664.5.peg.1234"/>
<dbReference type="eggNOG" id="COG0245">
    <property type="taxonomic scope" value="Bacteria"/>
</dbReference>
<dbReference type="HOGENOM" id="CLU_084630_2_0_6"/>
<dbReference type="UniPathway" id="UPA00056">
    <property type="reaction ID" value="UER00095"/>
</dbReference>
<dbReference type="Proteomes" id="UP000008540">
    <property type="component" value="Chromosome"/>
</dbReference>
<dbReference type="GO" id="GO:0008685">
    <property type="term" value="F:2-C-methyl-D-erythritol 2,4-cyclodiphosphate synthase activity"/>
    <property type="evidence" value="ECO:0007669"/>
    <property type="project" value="UniProtKB-UniRule"/>
</dbReference>
<dbReference type="GO" id="GO:0046872">
    <property type="term" value="F:metal ion binding"/>
    <property type="evidence" value="ECO:0007669"/>
    <property type="project" value="UniProtKB-KW"/>
</dbReference>
<dbReference type="GO" id="GO:0019288">
    <property type="term" value="P:isopentenyl diphosphate biosynthetic process, methylerythritol 4-phosphate pathway"/>
    <property type="evidence" value="ECO:0007669"/>
    <property type="project" value="UniProtKB-UniRule"/>
</dbReference>
<dbReference type="GO" id="GO:0016114">
    <property type="term" value="P:terpenoid biosynthetic process"/>
    <property type="evidence" value="ECO:0007669"/>
    <property type="project" value="InterPro"/>
</dbReference>
<dbReference type="CDD" id="cd00554">
    <property type="entry name" value="MECDP_synthase"/>
    <property type="match status" value="1"/>
</dbReference>
<dbReference type="FunFam" id="3.30.1330.50:FF:000001">
    <property type="entry name" value="2-C-methyl-D-erythritol 2,4-cyclodiphosphate synthase"/>
    <property type="match status" value="1"/>
</dbReference>
<dbReference type="Gene3D" id="3.30.1330.50">
    <property type="entry name" value="2-C-methyl-D-erythritol 2,4-cyclodiphosphate synthase"/>
    <property type="match status" value="1"/>
</dbReference>
<dbReference type="HAMAP" id="MF_00107">
    <property type="entry name" value="IspF"/>
    <property type="match status" value="1"/>
</dbReference>
<dbReference type="InterPro" id="IPR003526">
    <property type="entry name" value="MECDP_synthase"/>
</dbReference>
<dbReference type="InterPro" id="IPR020555">
    <property type="entry name" value="MECDP_synthase_CS"/>
</dbReference>
<dbReference type="InterPro" id="IPR036571">
    <property type="entry name" value="MECDP_synthase_sf"/>
</dbReference>
<dbReference type="NCBIfam" id="TIGR00151">
    <property type="entry name" value="ispF"/>
    <property type="match status" value="1"/>
</dbReference>
<dbReference type="PANTHER" id="PTHR43181">
    <property type="entry name" value="2-C-METHYL-D-ERYTHRITOL 2,4-CYCLODIPHOSPHATE SYNTHASE, CHLOROPLASTIC"/>
    <property type="match status" value="1"/>
</dbReference>
<dbReference type="PANTHER" id="PTHR43181:SF1">
    <property type="entry name" value="2-C-METHYL-D-ERYTHRITOL 2,4-CYCLODIPHOSPHATE SYNTHASE, CHLOROPLASTIC"/>
    <property type="match status" value="1"/>
</dbReference>
<dbReference type="Pfam" id="PF02542">
    <property type="entry name" value="YgbB"/>
    <property type="match status" value="1"/>
</dbReference>
<dbReference type="SUPFAM" id="SSF69765">
    <property type="entry name" value="IpsF-like"/>
    <property type="match status" value="1"/>
</dbReference>
<dbReference type="PROSITE" id="PS01350">
    <property type="entry name" value="ISPF"/>
    <property type="match status" value="1"/>
</dbReference>
<feature type="chain" id="PRO_0000237742" description="2-C-methyl-D-erythritol 2,4-cyclodiphosphate synthase">
    <location>
        <begin position="1"/>
        <end position="157"/>
    </location>
</feature>
<feature type="binding site" evidence="1">
    <location>
        <begin position="8"/>
        <end position="10"/>
    </location>
    <ligand>
        <name>4-CDP-2-C-methyl-D-erythritol 2-phosphate</name>
        <dbReference type="ChEBI" id="CHEBI:57919"/>
    </ligand>
</feature>
<feature type="binding site" evidence="1">
    <location>
        <position position="8"/>
    </location>
    <ligand>
        <name>a divalent metal cation</name>
        <dbReference type="ChEBI" id="CHEBI:60240"/>
    </ligand>
</feature>
<feature type="binding site" evidence="1">
    <location>
        <position position="10"/>
    </location>
    <ligand>
        <name>a divalent metal cation</name>
        <dbReference type="ChEBI" id="CHEBI:60240"/>
    </ligand>
</feature>
<feature type="binding site" evidence="1">
    <location>
        <begin position="34"/>
        <end position="35"/>
    </location>
    <ligand>
        <name>4-CDP-2-C-methyl-D-erythritol 2-phosphate</name>
        <dbReference type="ChEBI" id="CHEBI:57919"/>
    </ligand>
</feature>
<feature type="binding site" evidence="1">
    <location>
        <position position="42"/>
    </location>
    <ligand>
        <name>a divalent metal cation</name>
        <dbReference type="ChEBI" id="CHEBI:60240"/>
    </ligand>
</feature>
<feature type="binding site" evidence="1">
    <location>
        <begin position="56"/>
        <end position="58"/>
    </location>
    <ligand>
        <name>4-CDP-2-C-methyl-D-erythritol 2-phosphate</name>
        <dbReference type="ChEBI" id="CHEBI:57919"/>
    </ligand>
</feature>
<feature type="binding site" evidence="1">
    <location>
        <begin position="61"/>
        <end position="65"/>
    </location>
    <ligand>
        <name>4-CDP-2-C-methyl-D-erythritol 2-phosphate</name>
        <dbReference type="ChEBI" id="CHEBI:57919"/>
    </ligand>
</feature>
<feature type="binding site" evidence="1">
    <location>
        <begin position="100"/>
        <end position="106"/>
    </location>
    <ligand>
        <name>4-CDP-2-C-methyl-D-erythritol 2-phosphate</name>
        <dbReference type="ChEBI" id="CHEBI:57919"/>
    </ligand>
</feature>
<feature type="binding site" evidence="1">
    <location>
        <begin position="132"/>
        <end position="135"/>
    </location>
    <ligand>
        <name>4-CDP-2-C-methyl-D-erythritol 2-phosphate</name>
        <dbReference type="ChEBI" id="CHEBI:57919"/>
    </ligand>
</feature>
<feature type="binding site" evidence="1">
    <location>
        <position position="139"/>
    </location>
    <ligand>
        <name>4-CDP-2-C-methyl-D-erythritol 2-phosphate</name>
        <dbReference type="ChEBI" id="CHEBI:57919"/>
    </ligand>
</feature>
<feature type="binding site" evidence="1">
    <location>
        <position position="142"/>
    </location>
    <ligand>
        <name>4-CDP-2-C-methyl-D-erythritol 2-phosphate</name>
        <dbReference type="ChEBI" id="CHEBI:57919"/>
    </ligand>
</feature>
<feature type="site" description="Transition state stabilizer" evidence="1">
    <location>
        <position position="34"/>
    </location>
</feature>
<feature type="site" description="Transition state stabilizer" evidence="1">
    <location>
        <position position="133"/>
    </location>
</feature>
<protein>
    <recommendedName>
        <fullName evidence="1">2-C-methyl-D-erythritol 2,4-cyclodiphosphate synthase</fullName>
        <shortName evidence="1">MECDP-synthase</shortName>
        <shortName evidence="1">MECPP-synthase</shortName>
        <shortName evidence="1">MECPS</shortName>
        <ecNumber evidence="1">4.6.1.12</ecNumber>
    </recommendedName>
</protein>
<proteinExistence type="inferred from homology"/>
<accession>Q4KHF0</accession>